<protein>
    <recommendedName>
        <fullName>Pre-protein VI</fullName>
        <shortName>pVI</shortName>
    </recommendedName>
    <component>
        <recommendedName>
            <fullName>Endosome lysis protein</fullName>
        </recommendedName>
    </component>
</protein>
<gene>
    <name type="ORF">L3</name>
</gene>
<organism>
    <name type="scientific">Bovine adenovirus 2</name>
    <name type="common">BAdV-2</name>
    <name type="synonym">Mastadenovirus bos2</name>
    <dbReference type="NCBI Taxonomy" id="114429"/>
    <lineage>
        <taxon>Viruses</taxon>
        <taxon>Varidnaviria</taxon>
        <taxon>Bamfordvirae</taxon>
        <taxon>Preplasmiviricota</taxon>
        <taxon>Tectiliviricetes</taxon>
        <taxon>Rowavirales</taxon>
        <taxon>Adenoviridae</taxon>
        <taxon>Mastadenovirus</taxon>
        <taxon>Ovine mastadenovirus A</taxon>
    </lineage>
</organism>
<name>CAP6_ADEB2</name>
<reference key="1">
    <citation type="journal article" date="2000" name="Virus Res.">
        <title>Identification and sequence analysis of the core protein genes of bovine adenovirus 2.</title>
        <authorList>
            <person name="Rusvai M."/>
            <person name="Harrach B."/>
            <person name="Banrevi A."/>
            <person name="Evans P.S."/>
            <person name="Benko M."/>
        </authorList>
    </citation>
    <scope>NUCLEOTIDE SEQUENCE [GENOMIC DNA]</scope>
</reference>
<sequence length="43" mass="4584">MEGINFSALAPRYGSRPMLSSWSDIGTSSMNGGAFNWGSLWSG</sequence>
<evidence type="ECO:0000250" key="1"/>
<evidence type="ECO:0000250" key="2">
    <source>
        <dbReference type="UniProtKB" id="P03274"/>
    </source>
</evidence>
<evidence type="ECO:0000250" key="3">
    <source>
        <dbReference type="UniProtKB" id="P24937"/>
    </source>
</evidence>
<evidence type="ECO:0000305" key="4"/>
<dbReference type="EMBL" id="U44123">
    <property type="protein sequence ID" value="AAB16759.1"/>
    <property type="molecule type" value="Genomic_DNA"/>
</dbReference>
<dbReference type="GO" id="GO:0043657">
    <property type="term" value="C:host cell"/>
    <property type="evidence" value="ECO:0007669"/>
    <property type="project" value="GOC"/>
</dbReference>
<dbReference type="GO" id="GO:0030430">
    <property type="term" value="C:host cell cytoplasm"/>
    <property type="evidence" value="ECO:0007669"/>
    <property type="project" value="UniProtKB-SubCell"/>
</dbReference>
<dbReference type="GO" id="GO:0042025">
    <property type="term" value="C:host cell nucleus"/>
    <property type="evidence" value="ECO:0007669"/>
    <property type="project" value="UniProtKB-SubCell"/>
</dbReference>
<dbReference type="GO" id="GO:0019028">
    <property type="term" value="C:viral capsid"/>
    <property type="evidence" value="ECO:0007669"/>
    <property type="project" value="UniProtKB-KW"/>
</dbReference>
<dbReference type="GO" id="GO:0039664">
    <property type="term" value="P:lysis of host organelle involved in viral entry into host cell"/>
    <property type="evidence" value="ECO:0007669"/>
    <property type="project" value="UniProtKB-KW"/>
</dbReference>
<dbReference type="GO" id="GO:0075521">
    <property type="term" value="P:microtubule-dependent intracellular transport of viral material towards nucleus"/>
    <property type="evidence" value="ECO:0007669"/>
    <property type="project" value="UniProtKB-KW"/>
</dbReference>
<dbReference type="InterPro" id="IPR004243">
    <property type="entry name" value="McpVI"/>
</dbReference>
<dbReference type="Pfam" id="PF02993">
    <property type="entry name" value="MCPVI"/>
    <property type="match status" value="1"/>
</dbReference>
<comment type="function">
    <molecule>Pre-protein VI</molecule>
    <text evidence="3">During virus assembly, promotes hexon trimers nuclear import through nuclear pore complexes via an importin alpha/beta-dependent mechanism. By analogy to herpesviruses capsid assembly, might act as a chaperone to promote the formation of the icosahedral capsid.</text>
</comment>
<comment type="function">
    <molecule>Endosome lysis protein</molecule>
    <text evidence="2 3">Structural component of the virion that provides increased stability to the particle shell through its interaction with the core-capsid bridging protein and the hexon-linking protein VIII. Fibers shedding during virus entry into host cell allows the endosome lysis protein to be exposed as a membrane-lytic peptide. Exhibits pH-independent membrane fragmentation activity and probably mediates viral rapid escape from host endosome via organellar membrane lysis. It is not clear if it then remains partially associated with the capsid and involved in the intracellular microtubule-dependent transport of capsid to the nucleus, or if it is lost during endosomal penetration.</text>
</comment>
<comment type="subunit">
    <molecule>Pre-protein VI</molecule>
    <text evidence="2 3">Interacts with hexon protein; this interaction allows nuclear import of hexon trimers and possibly pre-capsid assembly. Interacts (via C-terminal NLS) with importin alpha/beta.</text>
</comment>
<comment type="subunit">
    <molecule>Endosome lysis protein</molecule>
    <text evidence="2 3">Interacts (via PPxY motif) with host NEDD4 ubiquitine ligase; this interaction might play a role in virus intracellular transport during entry. Part of a complex composed of the core-capsid bridging protein, the endosome lysis protein VI and the hexon-linking protein VIII; these interactions bridge the virus core to the capsid. Interacts with peripentonal hexons; this interaction stabilizes the capsid by gluing two peripentonal hexons together and joining them with an adjacent group-of-nine hexon. Protease cofactor: Heterodimer with the viral protease; disulfide-linked. Interacts with the viral protease.</text>
</comment>
<comment type="subcellular location">
    <molecule>Pre-protein VI</molecule>
    <subcellularLocation>
        <location evidence="3">Host nucleus</location>
    </subcellularLocation>
    <subcellularLocation>
        <location evidence="3">Host cytoplasm</location>
    </subcellularLocation>
    <text evidence="3">Shuttles between host cytoplasm and nucleus.</text>
</comment>
<comment type="subcellular location">
    <molecule>Endosome lysis protein</molecule>
    <subcellularLocation>
        <location evidence="3">Virion</location>
    </subcellularLocation>
    <text evidence="3">Associates with the base of each peripentonal hexon on the capsid interior. Present in around 360 copies per virion.</text>
</comment>
<comment type="induction">
    <text>Expressed in the late phase of the viral replicative cycle.</text>
</comment>
<comment type="domain">
    <text evidence="3">N-terminal amphipathic alpha-helix domain is essential for the membrane lytic activity.</text>
</comment>
<comment type="domain">
    <text evidence="3">Late-budding domains (L domains) are short sequence motifs essential for viral particle release. They can occur individually or in close proximity within structural proteins. They interacts with sorting cellular proteins of the multivesicular body (MVB) pathway. Most of these proteins are class E vacuolar protein sorting factors belonging to ESCRT-I, ESCRT-II or ESCRT-III complexes. Minor capsid protein 6 contains one L domain: a PPXY motif which binds to the WW domains of HECT (homologous to E6-AP C-terminus) E3 ubiquitin ligases, like NEDD4. In adenoviruses, this motif seems to play a role in microtubule-dependent intracellular trafficking toward the nucleus during virus entry into host cell and in suppression of DAXX-mediated repression of the immediate early E1A promoter.</text>
</comment>
<comment type="PTM">
    <text evidence="3">Ubiquitinated by Nedd4 following partial capsid disassembly; which might play a role in intracellular virus movement during entry.</text>
</comment>
<comment type="PTM">
    <text evidence="3">Protease cofactor: Contains the major nuclear import and export signals. Proteolytically removed during virion maturation. The processing of the C-terminus turns the precursor into a mature viral structural protein and abrogates its ability to promote hexon import and act as a potential chaperone protein.</text>
</comment>
<comment type="miscellaneous">
    <text evidence="1">All late proteins expressed from the major late promoter are produced by alternative splicing and alternative polyadenylation of the same gene giving rise to non-overlapping ORFs. A leader sequence is present in the N-terminus of all these mRNAs and is recognized by the viral shutoff protein to provide expression although conventional translation via ribosome scanning from the cap has been shut off in the host cell (By similarity).</text>
</comment>
<comment type="similarity">
    <text evidence="4">Belongs to the adenoviridae protein VI family.</text>
</comment>
<organismHost>
    <name type="scientific">Bos taurus</name>
    <name type="common">Bovine</name>
    <dbReference type="NCBI Taxonomy" id="9913"/>
</organismHost>
<proteinExistence type="evidence at transcript level"/>
<accession>Q96627</accession>
<feature type="chain" id="PRO_0000421429" description="Pre-protein VI">
    <location>
        <begin position="1"/>
        <end position="43" status="greater than"/>
    </location>
</feature>
<feature type="propeptide" id="PRO_0000036558" evidence="1">
    <location>
        <begin position="1"/>
        <end position="33"/>
    </location>
</feature>
<feature type="chain" id="PRO_0000036559" description="Endosome lysis protein">
    <location>
        <begin position="34"/>
        <end position="43" status="greater than"/>
    </location>
</feature>
<feature type="site" description="Cleavage; by viral protease" evidence="1">
    <location>
        <begin position="33"/>
        <end position="34"/>
    </location>
</feature>
<feature type="non-terminal residue">
    <location>
        <position position="43"/>
    </location>
</feature>
<keyword id="KW-0167">Capsid protein</keyword>
<keyword id="KW-1176">Cytoplasmic inwards viral transport</keyword>
<keyword id="KW-1015">Disulfide bond</keyword>
<keyword id="KW-1035">Host cytoplasm</keyword>
<keyword id="KW-1048">Host nucleus</keyword>
<keyword id="KW-0945">Host-virus interaction</keyword>
<keyword id="KW-0426">Late protein</keyword>
<keyword id="KW-1177">Microtubular inwards viral transport</keyword>
<keyword id="KW-0832">Ubl conjugation</keyword>
<keyword id="KW-0118">Viral capsid assembly</keyword>
<keyword id="KW-1162">Viral penetration into host cytoplasm</keyword>
<keyword id="KW-1174">Viral penetration via lysis of host organellar membrane</keyword>
<keyword id="KW-1188">Viral release from host cell</keyword>
<keyword id="KW-0946">Virion</keyword>
<keyword id="KW-1160">Virus entry into host cell</keyword>